<organism>
    <name type="scientific">Campylobacter curvus (strain 525.92)</name>
    <dbReference type="NCBI Taxonomy" id="360105"/>
    <lineage>
        <taxon>Bacteria</taxon>
        <taxon>Pseudomonadati</taxon>
        <taxon>Campylobacterota</taxon>
        <taxon>Epsilonproteobacteria</taxon>
        <taxon>Campylobacterales</taxon>
        <taxon>Campylobacteraceae</taxon>
        <taxon>Campylobacter</taxon>
    </lineage>
</organism>
<comment type="function">
    <text evidence="1">Specifically methylates the N4 position of cytidine in position 1402 (C1402) of 16S rRNA.</text>
</comment>
<comment type="catalytic activity">
    <reaction evidence="1">
        <text>cytidine(1402) in 16S rRNA + S-adenosyl-L-methionine = N(4)-methylcytidine(1402) in 16S rRNA + S-adenosyl-L-homocysteine + H(+)</text>
        <dbReference type="Rhea" id="RHEA:42928"/>
        <dbReference type="Rhea" id="RHEA-COMP:10286"/>
        <dbReference type="Rhea" id="RHEA-COMP:10287"/>
        <dbReference type="ChEBI" id="CHEBI:15378"/>
        <dbReference type="ChEBI" id="CHEBI:57856"/>
        <dbReference type="ChEBI" id="CHEBI:59789"/>
        <dbReference type="ChEBI" id="CHEBI:74506"/>
        <dbReference type="ChEBI" id="CHEBI:82748"/>
        <dbReference type="EC" id="2.1.1.199"/>
    </reaction>
</comment>
<comment type="subcellular location">
    <subcellularLocation>
        <location evidence="1">Cytoplasm</location>
    </subcellularLocation>
</comment>
<comment type="similarity">
    <text evidence="1">Belongs to the methyltransferase superfamily. RsmH family.</text>
</comment>
<dbReference type="EC" id="2.1.1.199" evidence="1"/>
<dbReference type="EMBL" id="CP000767">
    <property type="protein sequence ID" value="EAU00287.1"/>
    <property type="molecule type" value="Genomic_DNA"/>
</dbReference>
<dbReference type="RefSeq" id="WP_009651498.1">
    <property type="nucleotide sequence ID" value="NC_009715.2"/>
</dbReference>
<dbReference type="SMR" id="A7GYX6"/>
<dbReference type="STRING" id="360105.CCV52592_1847"/>
<dbReference type="KEGG" id="ccv:CCV52592_1847"/>
<dbReference type="HOGENOM" id="CLU_038422_3_0_7"/>
<dbReference type="OrthoDB" id="9806637at2"/>
<dbReference type="Proteomes" id="UP000006380">
    <property type="component" value="Chromosome"/>
</dbReference>
<dbReference type="GO" id="GO:0005737">
    <property type="term" value="C:cytoplasm"/>
    <property type="evidence" value="ECO:0007669"/>
    <property type="project" value="UniProtKB-SubCell"/>
</dbReference>
<dbReference type="GO" id="GO:0071424">
    <property type="term" value="F:rRNA (cytosine-N4-)-methyltransferase activity"/>
    <property type="evidence" value="ECO:0007669"/>
    <property type="project" value="UniProtKB-UniRule"/>
</dbReference>
<dbReference type="GO" id="GO:0070475">
    <property type="term" value="P:rRNA base methylation"/>
    <property type="evidence" value="ECO:0007669"/>
    <property type="project" value="UniProtKB-UniRule"/>
</dbReference>
<dbReference type="CDD" id="cd02440">
    <property type="entry name" value="AdoMet_MTases"/>
    <property type="match status" value="1"/>
</dbReference>
<dbReference type="Gene3D" id="1.10.150.170">
    <property type="entry name" value="Putative methyltransferase TM0872, insert domain"/>
    <property type="match status" value="1"/>
</dbReference>
<dbReference type="Gene3D" id="3.40.50.150">
    <property type="entry name" value="Vaccinia Virus protein VP39"/>
    <property type="match status" value="1"/>
</dbReference>
<dbReference type="HAMAP" id="MF_01007">
    <property type="entry name" value="16SrRNA_methyltr_H"/>
    <property type="match status" value="1"/>
</dbReference>
<dbReference type="InterPro" id="IPR002903">
    <property type="entry name" value="RsmH"/>
</dbReference>
<dbReference type="InterPro" id="IPR023397">
    <property type="entry name" value="SAM-dep_MeTrfase_MraW_recog"/>
</dbReference>
<dbReference type="InterPro" id="IPR029063">
    <property type="entry name" value="SAM-dependent_MTases_sf"/>
</dbReference>
<dbReference type="NCBIfam" id="TIGR00006">
    <property type="entry name" value="16S rRNA (cytosine(1402)-N(4))-methyltransferase RsmH"/>
    <property type="match status" value="1"/>
</dbReference>
<dbReference type="PANTHER" id="PTHR11265:SF0">
    <property type="entry name" value="12S RRNA N4-METHYLCYTIDINE METHYLTRANSFERASE"/>
    <property type="match status" value="1"/>
</dbReference>
<dbReference type="PANTHER" id="PTHR11265">
    <property type="entry name" value="S-ADENOSYL-METHYLTRANSFERASE MRAW"/>
    <property type="match status" value="1"/>
</dbReference>
<dbReference type="Pfam" id="PF01795">
    <property type="entry name" value="Methyltransf_5"/>
    <property type="match status" value="1"/>
</dbReference>
<dbReference type="PIRSF" id="PIRSF004486">
    <property type="entry name" value="MraW"/>
    <property type="match status" value="1"/>
</dbReference>
<dbReference type="SUPFAM" id="SSF81799">
    <property type="entry name" value="Putative methyltransferase TM0872, insert domain"/>
    <property type="match status" value="1"/>
</dbReference>
<dbReference type="SUPFAM" id="SSF53335">
    <property type="entry name" value="S-adenosyl-L-methionine-dependent methyltransferases"/>
    <property type="match status" value="1"/>
</dbReference>
<keyword id="KW-0963">Cytoplasm</keyword>
<keyword id="KW-0489">Methyltransferase</keyword>
<keyword id="KW-1185">Reference proteome</keyword>
<keyword id="KW-0698">rRNA processing</keyword>
<keyword id="KW-0949">S-adenosyl-L-methionine</keyword>
<keyword id="KW-0808">Transferase</keyword>
<feature type="chain" id="PRO_0000386785" description="Ribosomal RNA small subunit methyltransferase H">
    <location>
        <begin position="1"/>
        <end position="308"/>
    </location>
</feature>
<feature type="binding site" evidence="1">
    <location>
        <begin position="32"/>
        <end position="34"/>
    </location>
    <ligand>
        <name>S-adenosyl-L-methionine</name>
        <dbReference type="ChEBI" id="CHEBI:59789"/>
    </ligand>
</feature>
<feature type="binding site" evidence="1">
    <location>
        <position position="51"/>
    </location>
    <ligand>
        <name>S-adenosyl-L-methionine</name>
        <dbReference type="ChEBI" id="CHEBI:59789"/>
    </ligand>
</feature>
<feature type="binding site" evidence="1">
    <location>
        <position position="78"/>
    </location>
    <ligand>
        <name>S-adenosyl-L-methionine</name>
        <dbReference type="ChEBI" id="CHEBI:59789"/>
    </ligand>
</feature>
<feature type="binding site" evidence="1">
    <location>
        <position position="99"/>
    </location>
    <ligand>
        <name>S-adenosyl-L-methionine</name>
        <dbReference type="ChEBI" id="CHEBI:59789"/>
    </ligand>
</feature>
<feature type="binding site" evidence="1">
    <location>
        <position position="106"/>
    </location>
    <ligand>
        <name>S-adenosyl-L-methionine</name>
        <dbReference type="ChEBI" id="CHEBI:59789"/>
    </ligand>
</feature>
<protein>
    <recommendedName>
        <fullName evidence="1">Ribosomal RNA small subunit methyltransferase H</fullName>
        <ecNumber evidence="1">2.1.1.199</ecNumber>
    </recommendedName>
    <alternativeName>
        <fullName evidence="1">16S rRNA m(4)C1402 methyltransferase</fullName>
    </alternativeName>
    <alternativeName>
        <fullName evidence="1">rRNA (cytosine-N(4)-)-methyltransferase RsmH</fullName>
    </alternativeName>
</protein>
<sequence length="308" mass="33843">MQSPHISVLLDEVLDAFHGLSGTFIDCTLGYGGHSGALLEQNKNLRLIACDKDDEAIEFSKKRLENFGDRVKIYKSDFSQLIKVLSTDELKNVRGILADIGVSSLQLDKNERGFSINSDTLDMRMDRACEFSAADVINSYSQQNLAEIFSKYGELSNAKALAAKIVSARNLKKITSAKELASIIGTGRVNGRSVSPAILAFQAIRVEVNDELGELNRLLESIKSANLKECKVAIISFHSLEDRIVKNTFKSWAQSCICPPNAMRCKCGNDHAIGKILTKKAIVASQKEIAANPRSSSAKMRVFEIKGR</sequence>
<accession>A7GYX6</accession>
<name>RSMH_CAMC5</name>
<gene>
    <name evidence="1" type="primary">rsmH</name>
    <name type="synonym">mraW</name>
    <name type="ordered locus">Ccur92_11140</name>
    <name type="ORF">CCV52592_1847</name>
</gene>
<proteinExistence type="inferred from homology"/>
<reference key="1">
    <citation type="submission" date="2007-07" db="EMBL/GenBank/DDBJ databases">
        <title>Genome sequence of Campylobacter curvus 525.92 isolated from human feces.</title>
        <authorList>
            <person name="Fouts D.E."/>
            <person name="Mongodin E.F."/>
            <person name="Puiu D."/>
            <person name="Sebastian Y."/>
            <person name="Miller W.G."/>
            <person name="Mandrell R.E."/>
            <person name="Lastovica A.J."/>
            <person name="Nelson K.E."/>
        </authorList>
    </citation>
    <scope>NUCLEOTIDE SEQUENCE [LARGE SCALE GENOMIC DNA]</scope>
    <source>
        <strain>525.92</strain>
    </source>
</reference>
<evidence type="ECO:0000255" key="1">
    <source>
        <dbReference type="HAMAP-Rule" id="MF_01007"/>
    </source>
</evidence>